<accession>B2S0I9</accession>
<reference key="1">
    <citation type="submission" date="2004-12" db="EMBL/GenBank/DDBJ databases">
        <title>The genome sequence of Borrelia hermsii and Borrelia turicatae: comparative analysis of two agents of endemic N. America relapsing fever.</title>
        <authorList>
            <person name="Porcella S.F."/>
            <person name="Raffel S.J."/>
            <person name="Schrumpf M.E."/>
            <person name="Montgomery B."/>
            <person name="Smith T."/>
            <person name="Schwan T.G."/>
        </authorList>
    </citation>
    <scope>NUCLEOTIDE SEQUENCE [LARGE SCALE GENOMIC DNA]</scope>
    <source>
        <strain>HS1 / DAH</strain>
    </source>
</reference>
<sequence length="66" mass="7950">MLKKFKDLTLEDMKARRLALRKEYMDLRFKAVVGHVENPLKKRELRRDIARLNTIIHEYAIGIRKV</sequence>
<keyword id="KW-0687">Ribonucleoprotein</keyword>
<keyword id="KW-0689">Ribosomal protein</keyword>
<evidence type="ECO:0000255" key="1">
    <source>
        <dbReference type="HAMAP-Rule" id="MF_00374"/>
    </source>
</evidence>
<evidence type="ECO:0000305" key="2"/>
<protein>
    <recommendedName>
        <fullName evidence="1">Large ribosomal subunit protein uL29</fullName>
    </recommendedName>
    <alternativeName>
        <fullName evidence="2">50S ribosomal protein L29</fullName>
    </alternativeName>
</protein>
<feature type="chain" id="PRO_1000121735" description="Large ribosomal subunit protein uL29">
    <location>
        <begin position="1"/>
        <end position="66"/>
    </location>
</feature>
<comment type="similarity">
    <text evidence="1">Belongs to the universal ribosomal protein uL29 family.</text>
</comment>
<proteinExistence type="inferred from homology"/>
<organism>
    <name type="scientific">Borrelia hermsii (strain HS1 / DAH)</name>
    <dbReference type="NCBI Taxonomy" id="314723"/>
    <lineage>
        <taxon>Bacteria</taxon>
        <taxon>Pseudomonadati</taxon>
        <taxon>Spirochaetota</taxon>
        <taxon>Spirochaetia</taxon>
        <taxon>Spirochaetales</taxon>
        <taxon>Borreliaceae</taxon>
        <taxon>Borrelia</taxon>
    </lineage>
</organism>
<gene>
    <name evidence="1" type="primary">rpmC</name>
    <name type="ordered locus">BH0486</name>
</gene>
<dbReference type="EMBL" id="CP000048">
    <property type="protein sequence ID" value="AAX16995.1"/>
    <property type="molecule type" value="Genomic_DNA"/>
</dbReference>
<dbReference type="RefSeq" id="WP_012422249.1">
    <property type="nucleotide sequence ID" value="NZ_CP073136.1"/>
</dbReference>
<dbReference type="SMR" id="B2S0I9"/>
<dbReference type="GeneID" id="71843304"/>
<dbReference type="KEGG" id="bhr:BH0486"/>
<dbReference type="HOGENOM" id="CLU_158491_5_0_12"/>
<dbReference type="Proteomes" id="UP000008834">
    <property type="component" value="Chromosome"/>
</dbReference>
<dbReference type="GO" id="GO:1990904">
    <property type="term" value="C:ribonucleoprotein complex"/>
    <property type="evidence" value="ECO:0007669"/>
    <property type="project" value="UniProtKB-KW"/>
</dbReference>
<dbReference type="GO" id="GO:0005840">
    <property type="term" value="C:ribosome"/>
    <property type="evidence" value="ECO:0007669"/>
    <property type="project" value="UniProtKB-KW"/>
</dbReference>
<dbReference type="GO" id="GO:0003735">
    <property type="term" value="F:structural constituent of ribosome"/>
    <property type="evidence" value="ECO:0007669"/>
    <property type="project" value="InterPro"/>
</dbReference>
<dbReference type="GO" id="GO:0006412">
    <property type="term" value="P:translation"/>
    <property type="evidence" value="ECO:0007669"/>
    <property type="project" value="UniProtKB-UniRule"/>
</dbReference>
<dbReference type="CDD" id="cd00427">
    <property type="entry name" value="Ribosomal_L29_HIP"/>
    <property type="match status" value="1"/>
</dbReference>
<dbReference type="Gene3D" id="1.10.287.310">
    <property type="match status" value="1"/>
</dbReference>
<dbReference type="HAMAP" id="MF_00374">
    <property type="entry name" value="Ribosomal_uL29"/>
    <property type="match status" value="1"/>
</dbReference>
<dbReference type="InterPro" id="IPR001854">
    <property type="entry name" value="Ribosomal_uL29"/>
</dbReference>
<dbReference type="InterPro" id="IPR036049">
    <property type="entry name" value="Ribosomal_uL29_sf"/>
</dbReference>
<dbReference type="NCBIfam" id="TIGR00012">
    <property type="entry name" value="L29"/>
    <property type="match status" value="1"/>
</dbReference>
<dbReference type="Pfam" id="PF00831">
    <property type="entry name" value="Ribosomal_L29"/>
    <property type="match status" value="1"/>
</dbReference>
<dbReference type="SUPFAM" id="SSF46561">
    <property type="entry name" value="Ribosomal protein L29 (L29p)"/>
    <property type="match status" value="1"/>
</dbReference>
<name>RL29_BORHD</name>